<organism>
    <name type="scientific">Mycobacterium sp. (strain MCS)</name>
    <dbReference type="NCBI Taxonomy" id="164756"/>
    <lineage>
        <taxon>Bacteria</taxon>
        <taxon>Bacillati</taxon>
        <taxon>Actinomycetota</taxon>
        <taxon>Actinomycetes</taxon>
        <taxon>Mycobacteriales</taxon>
        <taxon>Mycobacteriaceae</taxon>
        <taxon>Mycobacterium</taxon>
    </lineage>
</organism>
<accession>Q1B9I0</accession>
<sequence length="897" mass="96939">MQTHEIRKRFLDHFVKAGHTEVPSASVILDDPNLLFVNAGMVQFVPFFLGQRTPPYQRATSIQKCIRTPDIDEVGITTRHNTFFQMAGNFSFGDYFKKGAIEFAWTLLTNPVDQGGYGFDPEKLWATVYLDDDEAIQLWQEVAGLPLERIQRRGMADNYWSMGIPGPCGPSSEIYVDRGPEYGIEGGPEANEDRYIEIWNLVFMQNERGEGTGKSDFEILGPLPRKNIDTGMGIERVACLLQGVDNVYETDLLRPVIDAVAARAPRGYGRGSHSDDVRYRIIADHSRTAAILIGDGVSPGNDGRGYVLRRLLRRVIRSAKLLGIDDAVVGDLMATVRDAMGPSYPELVTDFDRIQRIAVAEETAFNRTLSSGSRLFEEAAQSTKAAGADRLSGRDAFTLHDTYGFPIELTLEMAAEADLAVDEEGFRSLMAEQRQRAKADAAARKQAHTDLTAYRELVDAHPTQFTGFDELTTEARILGIFVDGRRVPVVGHDTATAQHRIELVLDRSPFYAESGGQIADEGTITGTGASQTAKAAVSDVQKIAKTLWVHRVTVESGEFVEGDTVTAAVDPRWRHGATQGHSGTHMVHAALRQVLGPNAVQAGSLNRPGYLRFDFNWQGALTDDQRTQIEEVTNEAVEADFEVHSFTTELEKAKSMGAMALFGEAYPDEVRVVEIGGPFSLELCGGTHVRSSAQIGPVTILGESSVGSGVRRVEAYVGLDSFRHLAKERALMAGLASSLKVPSEEVPARVAGLVERLKAAEKELDRMRLANARAAAVNAVAGAERVGKVRLVAQRMAGGMSAGDLRTLVGDIRGKLGGDPAVVALIAEGDNDTVPFVVAVNPAAQDLGLRANELVKQFGAAVNGRGGGKADLAQGSGKGAAGIDAALAALRAEIDRS</sequence>
<protein>
    <recommendedName>
        <fullName evidence="1">Alanine--tRNA ligase</fullName>
        <ecNumber evidence="1">6.1.1.7</ecNumber>
    </recommendedName>
    <alternativeName>
        <fullName evidence="1">Alanyl-tRNA synthetase</fullName>
        <shortName evidence="1">AlaRS</shortName>
    </alternativeName>
</protein>
<name>SYA_MYCSS</name>
<dbReference type="EC" id="6.1.1.7" evidence="1"/>
<dbReference type="EMBL" id="CP000384">
    <property type="protein sequence ID" value="ABG08454.1"/>
    <property type="molecule type" value="Genomic_DNA"/>
</dbReference>
<dbReference type="SMR" id="Q1B9I0"/>
<dbReference type="KEGG" id="mmc:Mmcs_2346"/>
<dbReference type="HOGENOM" id="CLU_004485_1_1_11"/>
<dbReference type="BioCyc" id="MSP164756:G1G6O-2398-MONOMER"/>
<dbReference type="GO" id="GO:0005829">
    <property type="term" value="C:cytosol"/>
    <property type="evidence" value="ECO:0007669"/>
    <property type="project" value="TreeGrafter"/>
</dbReference>
<dbReference type="GO" id="GO:0004813">
    <property type="term" value="F:alanine-tRNA ligase activity"/>
    <property type="evidence" value="ECO:0007669"/>
    <property type="project" value="UniProtKB-UniRule"/>
</dbReference>
<dbReference type="GO" id="GO:0002161">
    <property type="term" value="F:aminoacyl-tRNA deacylase activity"/>
    <property type="evidence" value="ECO:0007669"/>
    <property type="project" value="TreeGrafter"/>
</dbReference>
<dbReference type="GO" id="GO:0005524">
    <property type="term" value="F:ATP binding"/>
    <property type="evidence" value="ECO:0007669"/>
    <property type="project" value="UniProtKB-UniRule"/>
</dbReference>
<dbReference type="GO" id="GO:0000049">
    <property type="term" value="F:tRNA binding"/>
    <property type="evidence" value="ECO:0007669"/>
    <property type="project" value="UniProtKB-KW"/>
</dbReference>
<dbReference type="GO" id="GO:0008270">
    <property type="term" value="F:zinc ion binding"/>
    <property type="evidence" value="ECO:0007669"/>
    <property type="project" value="UniProtKB-UniRule"/>
</dbReference>
<dbReference type="GO" id="GO:0006419">
    <property type="term" value="P:alanyl-tRNA aminoacylation"/>
    <property type="evidence" value="ECO:0007669"/>
    <property type="project" value="UniProtKB-UniRule"/>
</dbReference>
<dbReference type="CDD" id="cd00673">
    <property type="entry name" value="AlaRS_core"/>
    <property type="match status" value="1"/>
</dbReference>
<dbReference type="FunFam" id="3.10.310.40:FF:000001">
    <property type="entry name" value="Alanine--tRNA ligase"/>
    <property type="match status" value="1"/>
</dbReference>
<dbReference type="FunFam" id="3.30.54.20:FF:000001">
    <property type="entry name" value="Alanine--tRNA ligase"/>
    <property type="match status" value="1"/>
</dbReference>
<dbReference type="FunFam" id="3.30.930.10:FF:000004">
    <property type="entry name" value="Alanine--tRNA ligase"/>
    <property type="match status" value="1"/>
</dbReference>
<dbReference type="FunFam" id="3.30.980.10:FF:000004">
    <property type="entry name" value="Alanine--tRNA ligase, cytoplasmic"/>
    <property type="match status" value="1"/>
</dbReference>
<dbReference type="Gene3D" id="2.40.30.130">
    <property type="match status" value="1"/>
</dbReference>
<dbReference type="Gene3D" id="3.10.310.40">
    <property type="match status" value="1"/>
</dbReference>
<dbReference type="Gene3D" id="3.30.54.20">
    <property type="match status" value="1"/>
</dbReference>
<dbReference type="Gene3D" id="6.10.250.550">
    <property type="match status" value="1"/>
</dbReference>
<dbReference type="Gene3D" id="3.30.930.10">
    <property type="entry name" value="Bira Bifunctional Protein, Domain 2"/>
    <property type="match status" value="1"/>
</dbReference>
<dbReference type="Gene3D" id="3.30.980.10">
    <property type="entry name" value="Threonyl-trna Synthetase, Chain A, domain 2"/>
    <property type="match status" value="1"/>
</dbReference>
<dbReference type="HAMAP" id="MF_00036_B">
    <property type="entry name" value="Ala_tRNA_synth_B"/>
    <property type="match status" value="1"/>
</dbReference>
<dbReference type="InterPro" id="IPR045864">
    <property type="entry name" value="aa-tRNA-synth_II/BPL/LPL"/>
</dbReference>
<dbReference type="InterPro" id="IPR002318">
    <property type="entry name" value="Ala-tRNA-lgiase_IIc"/>
</dbReference>
<dbReference type="InterPro" id="IPR018162">
    <property type="entry name" value="Ala-tRNA-ligase_IIc_anticod-bd"/>
</dbReference>
<dbReference type="InterPro" id="IPR018165">
    <property type="entry name" value="Ala-tRNA-synth_IIc_core"/>
</dbReference>
<dbReference type="InterPro" id="IPR018164">
    <property type="entry name" value="Ala-tRNA-synth_IIc_N"/>
</dbReference>
<dbReference type="InterPro" id="IPR050058">
    <property type="entry name" value="Ala-tRNA_ligase"/>
</dbReference>
<dbReference type="InterPro" id="IPR023033">
    <property type="entry name" value="Ala_tRNA_ligase_euk/bac"/>
</dbReference>
<dbReference type="InterPro" id="IPR003156">
    <property type="entry name" value="DHHA1_dom"/>
</dbReference>
<dbReference type="InterPro" id="IPR018163">
    <property type="entry name" value="Thr/Ala-tRNA-synth_IIc_edit"/>
</dbReference>
<dbReference type="InterPro" id="IPR009000">
    <property type="entry name" value="Transl_B-barrel_sf"/>
</dbReference>
<dbReference type="InterPro" id="IPR012947">
    <property type="entry name" value="tRNA_SAD"/>
</dbReference>
<dbReference type="NCBIfam" id="TIGR00344">
    <property type="entry name" value="alaS"/>
    <property type="match status" value="1"/>
</dbReference>
<dbReference type="PANTHER" id="PTHR11777:SF9">
    <property type="entry name" value="ALANINE--TRNA LIGASE, CYTOPLASMIC"/>
    <property type="match status" value="1"/>
</dbReference>
<dbReference type="PANTHER" id="PTHR11777">
    <property type="entry name" value="ALANYL-TRNA SYNTHETASE"/>
    <property type="match status" value="1"/>
</dbReference>
<dbReference type="Pfam" id="PF02272">
    <property type="entry name" value="DHHA1"/>
    <property type="match status" value="1"/>
</dbReference>
<dbReference type="Pfam" id="PF01411">
    <property type="entry name" value="tRNA-synt_2c"/>
    <property type="match status" value="1"/>
</dbReference>
<dbReference type="Pfam" id="PF07973">
    <property type="entry name" value="tRNA_SAD"/>
    <property type="match status" value="1"/>
</dbReference>
<dbReference type="PRINTS" id="PR00980">
    <property type="entry name" value="TRNASYNTHALA"/>
</dbReference>
<dbReference type="SMART" id="SM00863">
    <property type="entry name" value="tRNA_SAD"/>
    <property type="match status" value="1"/>
</dbReference>
<dbReference type="SUPFAM" id="SSF55681">
    <property type="entry name" value="Class II aaRS and biotin synthetases"/>
    <property type="match status" value="1"/>
</dbReference>
<dbReference type="SUPFAM" id="SSF101353">
    <property type="entry name" value="Putative anticodon-binding domain of alanyl-tRNA synthetase (AlaRS)"/>
    <property type="match status" value="1"/>
</dbReference>
<dbReference type="SUPFAM" id="SSF55186">
    <property type="entry name" value="ThrRS/AlaRS common domain"/>
    <property type="match status" value="1"/>
</dbReference>
<dbReference type="SUPFAM" id="SSF50447">
    <property type="entry name" value="Translation proteins"/>
    <property type="match status" value="1"/>
</dbReference>
<dbReference type="PROSITE" id="PS50860">
    <property type="entry name" value="AA_TRNA_LIGASE_II_ALA"/>
    <property type="match status" value="1"/>
</dbReference>
<proteinExistence type="inferred from homology"/>
<comment type="function">
    <text evidence="1">Catalyzes the attachment of alanine to tRNA(Ala) in a two-step reaction: alanine is first activated by ATP to form Ala-AMP and then transferred to the acceptor end of tRNA(Ala). Also edits incorrectly charged Ser-tRNA(Ala) and Gly-tRNA(Ala) via its editing domain.</text>
</comment>
<comment type="catalytic activity">
    <reaction evidence="1">
        <text>tRNA(Ala) + L-alanine + ATP = L-alanyl-tRNA(Ala) + AMP + diphosphate</text>
        <dbReference type="Rhea" id="RHEA:12540"/>
        <dbReference type="Rhea" id="RHEA-COMP:9657"/>
        <dbReference type="Rhea" id="RHEA-COMP:9923"/>
        <dbReference type="ChEBI" id="CHEBI:30616"/>
        <dbReference type="ChEBI" id="CHEBI:33019"/>
        <dbReference type="ChEBI" id="CHEBI:57972"/>
        <dbReference type="ChEBI" id="CHEBI:78442"/>
        <dbReference type="ChEBI" id="CHEBI:78497"/>
        <dbReference type="ChEBI" id="CHEBI:456215"/>
        <dbReference type="EC" id="6.1.1.7"/>
    </reaction>
</comment>
<comment type="cofactor">
    <cofactor evidence="1">
        <name>Zn(2+)</name>
        <dbReference type="ChEBI" id="CHEBI:29105"/>
    </cofactor>
    <text evidence="1">Binds 1 zinc ion per subunit.</text>
</comment>
<comment type="subcellular location">
    <subcellularLocation>
        <location evidence="1">Cytoplasm</location>
    </subcellularLocation>
</comment>
<comment type="domain">
    <text evidence="1">Consists of three domains; the N-terminal catalytic domain, the editing domain and the C-terminal C-Ala domain. The editing domain removes incorrectly charged amino acids, while the C-Ala domain, along with tRNA(Ala), serves as a bridge to cooperatively bring together the editing and aminoacylation centers thus stimulating deacylation of misacylated tRNAs.</text>
</comment>
<comment type="similarity">
    <text evidence="1">Belongs to the class-II aminoacyl-tRNA synthetase family.</text>
</comment>
<feature type="chain" id="PRO_0000347686" description="Alanine--tRNA ligase">
    <location>
        <begin position="1"/>
        <end position="897"/>
    </location>
</feature>
<feature type="binding site" evidence="1">
    <location>
        <position position="581"/>
    </location>
    <ligand>
        <name>Zn(2+)</name>
        <dbReference type="ChEBI" id="CHEBI:29105"/>
    </ligand>
</feature>
<feature type="binding site" evidence="1">
    <location>
        <position position="585"/>
    </location>
    <ligand>
        <name>Zn(2+)</name>
        <dbReference type="ChEBI" id="CHEBI:29105"/>
    </ligand>
</feature>
<feature type="binding site" evidence="1">
    <location>
        <position position="684"/>
    </location>
    <ligand>
        <name>Zn(2+)</name>
        <dbReference type="ChEBI" id="CHEBI:29105"/>
    </ligand>
</feature>
<feature type="binding site" evidence="1">
    <location>
        <position position="688"/>
    </location>
    <ligand>
        <name>Zn(2+)</name>
        <dbReference type="ChEBI" id="CHEBI:29105"/>
    </ligand>
</feature>
<keyword id="KW-0030">Aminoacyl-tRNA synthetase</keyword>
<keyword id="KW-0067">ATP-binding</keyword>
<keyword id="KW-0963">Cytoplasm</keyword>
<keyword id="KW-0436">Ligase</keyword>
<keyword id="KW-0479">Metal-binding</keyword>
<keyword id="KW-0547">Nucleotide-binding</keyword>
<keyword id="KW-0648">Protein biosynthesis</keyword>
<keyword id="KW-0694">RNA-binding</keyword>
<keyword id="KW-0820">tRNA-binding</keyword>
<keyword id="KW-0862">Zinc</keyword>
<reference key="1">
    <citation type="submission" date="2006-06" db="EMBL/GenBank/DDBJ databases">
        <title>Complete sequence of chromosome of Mycobacterium sp. MCS.</title>
        <authorList>
            <consortium name="US DOE Joint Genome Institute"/>
            <person name="Copeland A."/>
            <person name="Lucas S."/>
            <person name="Lapidus A."/>
            <person name="Barry K."/>
            <person name="Detter J.C."/>
            <person name="Glavina del Rio T."/>
            <person name="Hammon N."/>
            <person name="Israni S."/>
            <person name="Dalin E."/>
            <person name="Tice H."/>
            <person name="Pitluck S."/>
            <person name="Martinez M."/>
            <person name="Schmutz J."/>
            <person name="Larimer F."/>
            <person name="Land M."/>
            <person name="Hauser L."/>
            <person name="Kyrpides N."/>
            <person name="Kim E."/>
            <person name="Miller C.D."/>
            <person name="Hughes J.E."/>
            <person name="Anderson A.J."/>
            <person name="Sims R.C."/>
            <person name="Richardson P."/>
        </authorList>
    </citation>
    <scope>NUCLEOTIDE SEQUENCE [LARGE SCALE GENOMIC DNA]</scope>
    <source>
        <strain>MCS</strain>
    </source>
</reference>
<gene>
    <name evidence="1" type="primary">alaS</name>
    <name type="ordered locus">Mmcs_2346</name>
</gene>
<evidence type="ECO:0000255" key="1">
    <source>
        <dbReference type="HAMAP-Rule" id="MF_00036"/>
    </source>
</evidence>